<keyword id="KW-0012">Acyltransferase</keyword>
<keyword id="KW-0903">Direct protein sequencing</keyword>
<keyword id="KW-1015">Disulfide bond</keyword>
<keyword id="KW-1185">Reference proteome</keyword>
<keyword id="KW-0964">Secreted</keyword>
<keyword id="KW-0732">Signal</keyword>
<keyword id="KW-0808">Transferase</keyword>
<gene>
    <name type="primary">fbpB</name>
    <name type="ordered locus">BQ2027_MB1918C</name>
</gene>
<feature type="signal peptide" evidence="2">
    <location>
        <begin position="1"/>
        <end position="40"/>
    </location>
</feature>
<feature type="chain" id="PRO_0000000217" description="Diacylglycerol acyltransferase/mycolyltransferase Ag85B">
    <location>
        <begin position="41"/>
        <end position="325"/>
    </location>
</feature>
<feature type="region of interest" description="Fibronectin-binding">
    <location>
        <begin position="98"/>
        <end position="108"/>
    </location>
</feature>
<feature type="active site" description="Nucleophile" evidence="1">
    <location>
        <position position="166"/>
    </location>
</feature>
<feature type="active site" evidence="1">
    <location>
        <position position="270"/>
    </location>
</feature>
<feature type="active site" evidence="1">
    <location>
        <position position="302"/>
    </location>
</feature>
<feature type="binding site" evidence="1">
    <location>
        <begin position="82"/>
        <end position="83"/>
    </location>
    <ligand>
        <name>substrate</name>
    </ligand>
</feature>
<feature type="binding site" evidence="1">
    <location>
        <position position="166"/>
    </location>
    <ligand>
        <name>substrate</name>
    </ligand>
</feature>
<feature type="binding site" evidence="1">
    <location>
        <position position="194"/>
    </location>
    <ligand>
        <name>substrate</name>
    </ligand>
</feature>
<feature type="binding site" evidence="1">
    <location>
        <begin position="272"/>
        <end position="275"/>
    </location>
    <ligand>
        <name>substrate</name>
    </ligand>
</feature>
<feature type="binding site" evidence="1">
    <location>
        <position position="279"/>
    </location>
    <ligand>
        <name>substrate</name>
    </ligand>
</feature>
<feature type="binding site" evidence="1">
    <location>
        <begin position="302"/>
        <end position="304"/>
    </location>
    <ligand>
        <name>substrate</name>
    </ligand>
</feature>
<feature type="disulfide bond" evidence="1">
    <location>
        <begin position="127"/>
        <end position="132"/>
    </location>
</feature>
<feature type="sequence conflict" description="In Ref. 1; AAA25359." evidence="5" ref="1">
    <original>F</original>
    <variation>L</variation>
    <location>
        <position position="140"/>
    </location>
</feature>
<feature type="sequence conflict" description="In Ref. 1; AAA25359." evidence="5" ref="1">
    <location>
        <begin position="201"/>
        <end position="202"/>
    </location>
</feature>
<feature type="sequence conflict" description="In Ref. 1; AAA25359." evidence="5" ref="1">
    <original>NA</original>
    <variation>KP</variation>
    <location>
        <begin position="285"/>
        <end position="286"/>
    </location>
</feature>
<name>A85B_MYCBO</name>
<accession>P0C2T2</accession>
<accession>A0A1R3XZM1</accession>
<accession>P12942</accession>
<accession>X2BIS9</accession>
<sequence length="325" mass="34581">MTDVSRKIRAWGRRLMIGTAAAVVLPGLVGLAGGAATAGAFSRPGLPVEYLQVPSPSMGRDIKVQFQSGGNNSPAVYLLDGLRAQDDYNGWDINTPAFEWYYQSGLSIVMPVGGQSSFYSDWYSPACGKAGCQTYKWETFLTSELPQWLSANRAVKPTGSAAIGLSMAGSSAMILAAYHPQQFIYAGSLSALLDPSQGMGPSLIGLAMGDAGGYKAADMWGPSSDPAWERNDPTQQIPKLVANNTRLWVYCGNGTPNELGGANIPAEFLENFVRSSNLKFQDAYNAAGGHNAVFNFPPNGTHSWEYWGAQLNAMKGDLQSSLGAG</sequence>
<proteinExistence type="evidence at protein level"/>
<evidence type="ECO:0000250" key="1"/>
<evidence type="ECO:0000269" key="2">
    <source>
    </source>
</evidence>
<evidence type="ECO:0000269" key="3">
    <source>
    </source>
</evidence>
<evidence type="ECO:0000303" key="4">
    <source>
    </source>
</evidence>
<evidence type="ECO:0000305" key="5"/>
<comment type="function">
    <text evidence="1 3">The antigen 85 proteins (FbpA, FbpB, FbpC) are responsible for the high affinity of mycobacteria for fibronectin, a large adhesive glycoprotein, which facilitates the attachment of Mycobacteria to murine alveolar macrophages (AMs) (PubMed:8406884). They also help to maintain the integrity of the cell wall by catalyzing the transfer of mycolic acids to cell wall arabinogalactan and through the synthesis of alpha,alpha-trehalose dimycolate (TDM, cord factor). They catalyze the transfer of a mycoloyl residue from one molecule of alpha,alpha-trehalose monomycolate (TMM) to another TMM, leading to the formation of TDM (By similarity).</text>
</comment>
<comment type="catalytic activity">
    <reaction>
        <text>2 alpha,alpha'-trehalose 6-mycolate = alpha,alpha'-trehalose 6,6'-bismycolate + alpha,alpha-trehalose</text>
        <dbReference type="Rhea" id="RHEA:23472"/>
        <dbReference type="ChEBI" id="CHEBI:16551"/>
        <dbReference type="ChEBI" id="CHEBI:18195"/>
        <dbReference type="ChEBI" id="CHEBI:18234"/>
        <dbReference type="EC" id="2.3.1.122"/>
    </reaction>
</comment>
<comment type="catalytic activity">
    <reaction>
        <text>an acyl-CoA + a 1,2-diacyl-sn-glycerol = a triacyl-sn-glycerol + CoA</text>
        <dbReference type="Rhea" id="RHEA:10868"/>
        <dbReference type="ChEBI" id="CHEBI:17815"/>
        <dbReference type="ChEBI" id="CHEBI:57287"/>
        <dbReference type="ChEBI" id="CHEBI:58342"/>
        <dbReference type="ChEBI" id="CHEBI:64615"/>
        <dbReference type="EC" id="2.3.1.20"/>
    </reaction>
</comment>
<comment type="subunit">
    <text evidence="3">Three regions of this protein interact with the collagen-binding domain of human fibronectin (FN1); binding is saturable and competed by gelatin (which binds to the same domain) but not by heparin (which binds to another domain of fibronectin) (PubMed:8406884).</text>
</comment>
<comment type="subcellular location">
    <subcellularLocation>
        <location evidence="1">Secreted</location>
    </subcellularLocation>
</comment>
<comment type="similarity">
    <text evidence="5">Belongs to the mycobacterial A85 antigen family.</text>
</comment>
<dbReference type="EC" id="2.3.1.122"/>
<dbReference type="EC" id="2.3.1.20"/>
<dbReference type="EMBL" id="M21839">
    <property type="protein sequence ID" value="AAA25359.1"/>
    <property type="molecule type" value="Genomic_DNA"/>
</dbReference>
<dbReference type="EMBL" id="LT708304">
    <property type="protein sequence ID" value="SIU00522.1"/>
    <property type="molecule type" value="Genomic_DNA"/>
</dbReference>
<dbReference type="PIR" id="A32348">
    <property type="entry name" value="A32348"/>
</dbReference>
<dbReference type="RefSeq" id="NP_855570.1">
    <property type="nucleotide sequence ID" value="NC_002945.3"/>
</dbReference>
<dbReference type="RefSeq" id="WP_003409456.1">
    <property type="nucleotide sequence ID" value="NC_002945.4"/>
</dbReference>
<dbReference type="SMR" id="P0C2T2"/>
<dbReference type="ESTHER" id="myctu-a85b">
    <property type="family name" value="A85-Mycolyl-transferase"/>
</dbReference>
<dbReference type="GeneID" id="45425859"/>
<dbReference type="KEGG" id="mbo:BQ2027_MB1918C"/>
<dbReference type="PATRIC" id="fig|233413.5.peg.2101"/>
<dbReference type="Proteomes" id="UP000001419">
    <property type="component" value="Chromosome"/>
</dbReference>
<dbReference type="GO" id="GO:0005576">
    <property type="term" value="C:extracellular region"/>
    <property type="evidence" value="ECO:0007669"/>
    <property type="project" value="UniProtKB-SubCell"/>
</dbReference>
<dbReference type="GO" id="GO:0004144">
    <property type="term" value="F:diacylglycerol O-acyltransferase activity"/>
    <property type="evidence" value="ECO:0007669"/>
    <property type="project" value="UniProtKB-EC"/>
</dbReference>
<dbReference type="GO" id="GO:0050348">
    <property type="term" value="F:trehalose O-mycolyltransferase activity"/>
    <property type="evidence" value="ECO:0007669"/>
    <property type="project" value="UniProtKB-EC"/>
</dbReference>
<dbReference type="FunFam" id="3.40.50.1820:FF:000086">
    <property type="entry name" value="Diacylglycerol acyltransferase/mycolyltransferase Ag85C"/>
    <property type="match status" value="1"/>
</dbReference>
<dbReference type="Gene3D" id="3.40.50.1820">
    <property type="entry name" value="alpha/beta hydrolase"/>
    <property type="match status" value="1"/>
</dbReference>
<dbReference type="InterPro" id="IPR029058">
    <property type="entry name" value="AB_hydrolase_fold"/>
</dbReference>
<dbReference type="InterPro" id="IPR000801">
    <property type="entry name" value="Esterase-like"/>
</dbReference>
<dbReference type="InterPro" id="IPR050583">
    <property type="entry name" value="Mycobacterial_A85_antigen"/>
</dbReference>
<dbReference type="PANTHER" id="PTHR48098:SF1">
    <property type="entry name" value="DIACYLGLYCEROL ACYLTRANSFERASE_MYCOLYLTRANSFERASE AG85A"/>
    <property type="match status" value="1"/>
</dbReference>
<dbReference type="PANTHER" id="PTHR48098">
    <property type="entry name" value="ENTEROCHELIN ESTERASE-RELATED"/>
    <property type="match status" value="1"/>
</dbReference>
<dbReference type="Pfam" id="PF00756">
    <property type="entry name" value="Esterase"/>
    <property type="match status" value="1"/>
</dbReference>
<dbReference type="SUPFAM" id="SSF53474">
    <property type="entry name" value="alpha/beta-Hydrolases"/>
    <property type="match status" value="1"/>
</dbReference>
<protein>
    <recommendedName>
        <fullName>Diacylglycerol acyltransferase/mycolyltransferase Ag85B</fullName>
        <shortName>DGAT</shortName>
        <ecNumber>2.3.1.122</ecNumber>
        <ecNumber>2.3.1.20</ecNumber>
    </recommendedName>
    <alternativeName>
        <fullName>30 kDa extracellular protein</fullName>
    </alternativeName>
    <alternativeName>
        <fullName>Acyl-CoA:diacylglycerol acyltransferase</fullName>
    </alternativeName>
    <alternativeName>
        <fullName>Antigen 85 complex B</fullName>
        <shortName>85B</shortName>
        <shortName>Ag85B</shortName>
    </alternativeName>
    <alternativeName>
        <fullName evidence="4">Extracellular alpha-antigen</fullName>
    </alternativeName>
    <alternativeName>
        <fullName>Fibronectin-binding protein B</fullName>
        <shortName>Fbps B</shortName>
    </alternativeName>
</protein>
<organism>
    <name type="scientific">Mycobacterium bovis (strain ATCC BAA-935 / AF2122/97)</name>
    <dbReference type="NCBI Taxonomy" id="233413"/>
    <lineage>
        <taxon>Bacteria</taxon>
        <taxon>Bacillati</taxon>
        <taxon>Actinomycetota</taxon>
        <taxon>Actinomycetes</taxon>
        <taxon>Mycobacteriales</taxon>
        <taxon>Mycobacteriaceae</taxon>
        <taxon>Mycobacterium</taxon>
        <taxon>Mycobacterium tuberculosis complex</taxon>
    </lineage>
</organism>
<reference key="1">
    <citation type="journal article" date="1988" name="J. Bacteriol.">
        <title>Cloning and expression of the Mycobacterium bovis BCG gene for extracellular alpha antigen.</title>
        <authorList>
            <person name="Matsuo K."/>
            <person name="Yamaguchi R."/>
            <person name="Yamazaki A."/>
            <person name="Tasaka H."/>
            <person name="Yamada T."/>
        </authorList>
    </citation>
    <scope>NUCLEOTIDE SEQUENCE [GENOMIC DNA]</scope>
    <scope>PROTEIN SEQUENCE OF 41-70</scope>
    <source>
        <strain>BCG / Tokyo</strain>
    </source>
</reference>
<reference key="2">
    <citation type="journal article" date="2003" name="Proc. Natl. Acad. Sci. U.S.A.">
        <title>The complete genome sequence of Mycobacterium bovis.</title>
        <authorList>
            <person name="Garnier T."/>
            <person name="Eiglmeier K."/>
            <person name="Camus J.-C."/>
            <person name="Medina N."/>
            <person name="Mansoor H."/>
            <person name="Pryor M."/>
            <person name="Duthoy S."/>
            <person name="Grondin S."/>
            <person name="Lacroix C."/>
            <person name="Monsempe C."/>
            <person name="Simon S."/>
            <person name="Harris B."/>
            <person name="Atkin R."/>
            <person name="Doggett J."/>
            <person name="Mayes R."/>
            <person name="Keating L."/>
            <person name="Wheeler P.R."/>
            <person name="Parkhill J."/>
            <person name="Barrell B.G."/>
            <person name="Cole S.T."/>
            <person name="Gordon S.V."/>
            <person name="Hewinson R.G."/>
        </authorList>
    </citation>
    <scope>NUCLEOTIDE SEQUENCE [LARGE SCALE GENOMIC DNA]</scope>
    <source>
        <strain>ATCC BAA-935 / AF2122/97</strain>
    </source>
</reference>
<reference key="3">
    <citation type="journal article" date="2017" name="Genome Announc.">
        <title>Updated reference genome sequence and annotation of Mycobacterium bovis AF2122/97.</title>
        <authorList>
            <person name="Malone K.M."/>
            <person name="Farrell D."/>
            <person name="Stuber T.P."/>
            <person name="Schubert O.T."/>
            <person name="Aebersold R."/>
            <person name="Robbe-Austerman S."/>
            <person name="Gordon S.V."/>
        </authorList>
    </citation>
    <scope>NUCLEOTIDE SEQUENCE [LARGE SCALE GENOMIC DNA]</scope>
    <scope>GENOME REANNOTATION</scope>
    <source>
        <strain>ATCC BAA-935 / AF2122/97</strain>
    </source>
</reference>
<reference key="4">
    <citation type="journal article" date="1993" name="Infect. Immun.">
        <title>Mechanism of interaction of the 85B secreted protein of Mycobacterium bovis with fibronectin.</title>
        <authorList>
            <person name="Peake P."/>
            <person name="Gooley A."/>
            <person name="Britton W.J."/>
        </authorList>
    </citation>
    <scope>BINDING TO HUMAN FIBRONECTIN</scope>
    <source>
        <strain>AN-5</strain>
    </source>
</reference>